<proteinExistence type="inferred from homology"/>
<organism>
    <name type="scientific">Verminephrobacter eiseniae (strain EF01-2)</name>
    <dbReference type="NCBI Taxonomy" id="391735"/>
    <lineage>
        <taxon>Bacteria</taxon>
        <taxon>Pseudomonadati</taxon>
        <taxon>Pseudomonadota</taxon>
        <taxon>Betaproteobacteria</taxon>
        <taxon>Burkholderiales</taxon>
        <taxon>Comamonadaceae</taxon>
        <taxon>Verminephrobacter</taxon>
    </lineage>
</organism>
<dbReference type="EMBL" id="CP000542">
    <property type="protein sequence ID" value="ABM58050.1"/>
    <property type="molecule type" value="Genomic_DNA"/>
</dbReference>
<dbReference type="RefSeq" id="WP_011810053.1">
    <property type="nucleotide sequence ID" value="NC_008786.1"/>
</dbReference>
<dbReference type="SMR" id="A1WK93"/>
<dbReference type="STRING" id="391735.Veis_2302"/>
<dbReference type="GeneID" id="76460866"/>
<dbReference type="KEGG" id="vei:Veis_2302"/>
<dbReference type="eggNOG" id="COG0522">
    <property type="taxonomic scope" value="Bacteria"/>
</dbReference>
<dbReference type="HOGENOM" id="CLU_092403_0_2_4"/>
<dbReference type="OrthoDB" id="9803672at2"/>
<dbReference type="Proteomes" id="UP000000374">
    <property type="component" value="Chromosome"/>
</dbReference>
<dbReference type="GO" id="GO:0015935">
    <property type="term" value="C:small ribosomal subunit"/>
    <property type="evidence" value="ECO:0007669"/>
    <property type="project" value="InterPro"/>
</dbReference>
<dbReference type="GO" id="GO:0019843">
    <property type="term" value="F:rRNA binding"/>
    <property type="evidence" value="ECO:0007669"/>
    <property type="project" value="UniProtKB-UniRule"/>
</dbReference>
<dbReference type="GO" id="GO:0003735">
    <property type="term" value="F:structural constituent of ribosome"/>
    <property type="evidence" value="ECO:0007669"/>
    <property type="project" value="InterPro"/>
</dbReference>
<dbReference type="GO" id="GO:0042274">
    <property type="term" value="P:ribosomal small subunit biogenesis"/>
    <property type="evidence" value="ECO:0007669"/>
    <property type="project" value="TreeGrafter"/>
</dbReference>
<dbReference type="GO" id="GO:0006412">
    <property type="term" value="P:translation"/>
    <property type="evidence" value="ECO:0007669"/>
    <property type="project" value="UniProtKB-UniRule"/>
</dbReference>
<dbReference type="CDD" id="cd00165">
    <property type="entry name" value="S4"/>
    <property type="match status" value="1"/>
</dbReference>
<dbReference type="FunFam" id="1.10.1050.10:FF:000001">
    <property type="entry name" value="30S ribosomal protein S4"/>
    <property type="match status" value="1"/>
</dbReference>
<dbReference type="FunFam" id="3.10.290.10:FF:000001">
    <property type="entry name" value="30S ribosomal protein S4"/>
    <property type="match status" value="1"/>
</dbReference>
<dbReference type="Gene3D" id="1.10.1050.10">
    <property type="entry name" value="Ribosomal Protein S4 Delta 41, Chain A, domain 1"/>
    <property type="match status" value="1"/>
</dbReference>
<dbReference type="Gene3D" id="3.10.290.10">
    <property type="entry name" value="RNA-binding S4 domain"/>
    <property type="match status" value="1"/>
</dbReference>
<dbReference type="HAMAP" id="MF_01306_B">
    <property type="entry name" value="Ribosomal_uS4_B"/>
    <property type="match status" value="1"/>
</dbReference>
<dbReference type="InterPro" id="IPR022801">
    <property type="entry name" value="Ribosomal_uS4"/>
</dbReference>
<dbReference type="InterPro" id="IPR005709">
    <property type="entry name" value="Ribosomal_uS4_bac-type"/>
</dbReference>
<dbReference type="InterPro" id="IPR018079">
    <property type="entry name" value="Ribosomal_uS4_CS"/>
</dbReference>
<dbReference type="InterPro" id="IPR001912">
    <property type="entry name" value="Ribosomal_uS4_N"/>
</dbReference>
<dbReference type="InterPro" id="IPR002942">
    <property type="entry name" value="S4_RNA-bd"/>
</dbReference>
<dbReference type="InterPro" id="IPR036986">
    <property type="entry name" value="S4_RNA-bd_sf"/>
</dbReference>
<dbReference type="NCBIfam" id="NF003717">
    <property type="entry name" value="PRK05327.1"/>
    <property type="match status" value="1"/>
</dbReference>
<dbReference type="NCBIfam" id="TIGR01017">
    <property type="entry name" value="rpsD_bact"/>
    <property type="match status" value="1"/>
</dbReference>
<dbReference type="PANTHER" id="PTHR11831">
    <property type="entry name" value="30S 40S RIBOSOMAL PROTEIN"/>
    <property type="match status" value="1"/>
</dbReference>
<dbReference type="PANTHER" id="PTHR11831:SF4">
    <property type="entry name" value="SMALL RIBOSOMAL SUBUNIT PROTEIN US4M"/>
    <property type="match status" value="1"/>
</dbReference>
<dbReference type="Pfam" id="PF00163">
    <property type="entry name" value="Ribosomal_S4"/>
    <property type="match status" value="1"/>
</dbReference>
<dbReference type="Pfam" id="PF01479">
    <property type="entry name" value="S4"/>
    <property type="match status" value="1"/>
</dbReference>
<dbReference type="SMART" id="SM01390">
    <property type="entry name" value="Ribosomal_S4"/>
    <property type="match status" value="1"/>
</dbReference>
<dbReference type="SMART" id="SM00363">
    <property type="entry name" value="S4"/>
    <property type="match status" value="1"/>
</dbReference>
<dbReference type="SUPFAM" id="SSF55174">
    <property type="entry name" value="Alpha-L RNA-binding motif"/>
    <property type="match status" value="1"/>
</dbReference>
<dbReference type="PROSITE" id="PS00632">
    <property type="entry name" value="RIBOSOMAL_S4"/>
    <property type="match status" value="1"/>
</dbReference>
<dbReference type="PROSITE" id="PS50889">
    <property type="entry name" value="S4"/>
    <property type="match status" value="1"/>
</dbReference>
<keyword id="KW-1185">Reference proteome</keyword>
<keyword id="KW-0687">Ribonucleoprotein</keyword>
<keyword id="KW-0689">Ribosomal protein</keyword>
<keyword id="KW-0694">RNA-binding</keyword>
<keyword id="KW-0699">rRNA-binding</keyword>
<name>RS4_VEREI</name>
<evidence type="ECO:0000255" key="1">
    <source>
        <dbReference type="HAMAP-Rule" id="MF_01306"/>
    </source>
</evidence>
<evidence type="ECO:0000256" key="2">
    <source>
        <dbReference type="SAM" id="MobiDB-lite"/>
    </source>
</evidence>
<evidence type="ECO:0000305" key="3"/>
<gene>
    <name evidence="1" type="primary">rpsD</name>
    <name type="ordered locus">Veis_2302</name>
</gene>
<comment type="function">
    <text evidence="1">One of the primary rRNA binding proteins, it binds directly to 16S rRNA where it nucleates assembly of the body of the 30S subunit.</text>
</comment>
<comment type="function">
    <text evidence="1">With S5 and S12 plays an important role in translational accuracy.</text>
</comment>
<comment type="subunit">
    <text evidence="1">Part of the 30S ribosomal subunit. Contacts protein S5. The interaction surface between S4 and S5 is involved in control of translational fidelity.</text>
</comment>
<comment type="similarity">
    <text evidence="1">Belongs to the universal ribosomal protein uS4 family.</text>
</comment>
<accession>A1WK93</accession>
<protein>
    <recommendedName>
        <fullName evidence="1">Small ribosomal subunit protein uS4</fullName>
    </recommendedName>
    <alternativeName>
        <fullName evidence="3">30S ribosomal protein S4</fullName>
    </alternativeName>
</protein>
<reference key="1">
    <citation type="submission" date="2006-12" db="EMBL/GenBank/DDBJ databases">
        <title>Complete sequence of chromosome 1 of Verminephrobacter eiseniae EF01-2.</title>
        <authorList>
            <person name="Copeland A."/>
            <person name="Lucas S."/>
            <person name="Lapidus A."/>
            <person name="Barry K."/>
            <person name="Detter J.C."/>
            <person name="Glavina del Rio T."/>
            <person name="Dalin E."/>
            <person name="Tice H."/>
            <person name="Pitluck S."/>
            <person name="Chertkov O."/>
            <person name="Brettin T."/>
            <person name="Bruce D."/>
            <person name="Han C."/>
            <person name="Tapia R."/>
            <person name="Gilna P."/>
            <person name="Schmutz J."/>
            <person name="Larimer F."/>
            <person name="Land M."/>
            <person name="Hauser L."/>
            <person name="Kyrpides N."/>
            <person name="Kim E."/>
            <person name="Stahl D."/>
            <person name="Richardson P."/>
        </authorList>
    </citation>
    <scope>NUCLEOTIDE SEQUENCE [LARGE SCALE GENOMIC DNA]</scope>
    <source>
        <strain>EF01-2</strain>
    </source>
</reference>
<sequence>MARYLGPKAKLSRREGTDLFLKSARRSIADKSKFDSKPGQHGRTSGARTSDYGLQLREKQKVKRMYGVLEKQFRRYFEAAESRKGNTGANLLFLLESRLDNVVYRMGFGSTRAEARQLVSHKAITVNGQSVNIPSYLVKTGDLVAVREKSKKQGRIAEALQLATQVGMPAWVEVNTEKAEGLFKKAPDRDEFGADINESLIVELYSR</sequence>
<feature type="chain" id="PRO_0000293394" description="Small ribosomal subunit protein uS4">
    <location>
        <begin position="1"/>
        <end position="207"/>
    </location>
</feature>
<feature type="domain" description="S4 RNA-binding" evidence="1">
    <location>
        <begin position="97"/>
        <end position="157"/>
    </location>
</feature>
<feature type="region of interest" description="Disordered" evidence="2">
    <location>
        <begin position="30"/>
        <end position="51"/>
    </location>
</feature>